<feature type="chain" id="PRO_0000160381" description="ATP-dependent Clp protease ATP-binding subunit ClpX">
    <location>
        <begin position="1"/>
        <end position="412"/>
    </location>
</feature>
<feature type="domain" description="ClpX-type ZB" evidence="2">
    <location>
        <begin position="1"/>
        <end position="50"/>
    </location>
</feature>
<feature type="binding site" evidence="2">
    <location>
        <position position="9"/>
    </location>
    <ligand>
        <name>Zn(2+)</name>
        <dbReference type="ChEBI" id="CHEBI:29105"/>
    </ligand>
</feature>
<feature type="binding site" evidence="2">
    <location>
        <position position="12"/>
    </location>
    <ligand>
        <name>Zn(2+)</name>
        <dbReference type="ChEBI" id="CHEBI:29105"/>
    </ligand>
</feature>
<feature type="binding site" evidence="2">
    <location>
        <position position="31"/>
    </location>
    <ligand>
        <name>Zn(2+)</name>
        <dbReference type="ChEBI" id="CHEBI:29105"/>
    </ligand>
</feature>
<feature type="binding site" evidence="2">
    <location>
        <position position="34"/>
    </location>
    <ligand>
        <name>Zn(2+)</name>
        <dbReference type="ChEBI" id="CHEBI:29105"/>
    </ligand>
</feature>
<feature type="binding site" evidence="1">
    <location>
        <begin position="119"/>
        <end position="126"/>
    </location>
    <ligand>
        <name>ATP</name>
        <dbReference type="ChEBI" id="CHEBI:30616"/>
    </ligand>
</feature>
<name>CLPX_MANSM</name>
<reference key="1">
    <citation type="journal article" date="2004" name="Nat. Biotechnol.">
        <title>The genome sequence of the capnophilic rumen bacterium Mannheimia succiniciproducens.</title>
        <authorList>
            <person name="Hong S.H."/>
            <person name="Kim J.S."/>
            <person name="Lee S.Y."/>
            <person name="In Y.H."/>
            <person name="Choi S.S."/>
            <person name="Rih J.-K."/>
            <person name="Kim C.H."/>
            <person name="Jeong H."/>
            <person name="Hur C.G."/>
            <person name="Kim J.J."/>
        </authorList>
    </citation>
    <scope>NUCLEOTIDE SEQUENCE [LARGE SCALE GENOMIC DNA]</scope>
    <source>
        <strain>KCTC 0769BP / MBEL55E</strain>
    </source>
</reference>
<keyword id="KW-0067">ATP-binding</keyword>
<keyword id="KW-0143">Chaperone</keyword>
<keyword id="KW-0479">Metal-binding</keyword>
<keyword id="KW-0547">Nucleotide-binding</keyword>
<keyword id="KW-0862">Zinc</keyword>
<gene>
    <name evidence="1" type="primary">clpX</name>
    <name type="ordered locus">MS1846</name>
</gene>
<comment type="function">
    <text evidence="1">ATP-dependent specificity component of the Clp protease. It directs the protease to specific substrates. Can perform chaperone functions in the absence of ClpP.</text>
</comment>
<comment type="subunit">
    <text evidence="1">Component of the ClpX-ClpP complex. Forms a hexameric ring that, in the presence of ATP, binds to fourteen ClpP subunits assembled into a disk-like structure with a central cavity, resembling the structure of eukaryotic proteasomes.</text>
</comment>
<comment type="similarity">
    <text evidence="1">Belongs to the ClpX chaperone family.</text>
</comment>
<protein>
    <recommendedName>
        <fullName evidence="1">ATP-dependent Clp protease ATP-binding subunit ClpX</fullName>
    </recommendedName>
</protein>
<proteinExistence type="inferred from homology"/>
<dbReference type="EMBL" id="AE016827">
    <property type="protein sequence ID" value="AAU38453.1"/>
    <property type="molecule type" value="Genomic_DNA"/>
</dbReference>
<dbReference type="RefSeq" id="WP_011201009.1">
    <property type="nucleotide sequence ID" value="NC_006300.1"/>
</dbReference>
<dbReference type="SMR" id="Q65RF7"/>
<dbReference type="STRING" id="221988.MS1846"/>
<dbReference type="KEGG" id="msu:MS1846"/>
<dbReference type="eggNOG" id="COG1219">
    <property type="taxonomic scope" value="Bacteria"/>
</dbReference>
<dbReference type="HOGENOM" id="CLU_014218_8_2_6"/>
<dbReference type="OrthoDB" id="9804062at2"/>
<dbReference type="Proteomes" id="UP000000607">
    <property type="component" value="Chromosome"/>
</dbReference>
<dbReference type="GO" id="GO:0009376">
    <property type="term" value="C:HslUV protease complex"/>
    <property type="evidence" value="ECO:0007669"/>
    <property type="project" value="TreeGrafter"/>
</dbReference>
<dbReference type="GO" id="GO:0005524">
    <property type="term" value="F:ATP binding"/>
    <property type="evidence" value="ECO:0007669"/>
    <property type="project" value="UniProtKB-UniRule"/>
</dbReference>
<dbReference type="GO" id="GO:0016887">
    <property type="term" value="F:ATP hydrolysis activity"/>
    <property type="evidence" value="ECO:0007669"/>
    <property type="project" value="InterPro"/>
</dbReference>
<dbReference type="GO" id="GO:0140662">
    <property type="term" value="F:ATP-dependent protein folding chaperone"/>
    <property type="evidence" value="ECO:0007669"/>
    <property type="project" value="InterPro"/>
</dbReference>
<dbReference type="GO" id="GO:0046983">
    <property type="term" value="F:protein dimerization activity"/>
    <property type="evidence" value="ECO:0007669"/>
    <property type="project" value="InterPro"/>
</dbReference>
<dbReference type="GO" id="GO:0051082">
    <property type="term" value="F:unfolded protein binding"/>
    <property type="evidence" value="ECO:0007669"/>
    <property type="project" value="UniProtKB-UniRule"/>
</dbReference>
<dbReference type="GO" id="GO:0008270">
    <property type="term" value="F:zinc ion binding"/>
    <property type="evidence" value="ECO:0007669"/>
    <property type="project" value="InterPro"/>
</dbReference>
<dbReference type="GO" id="GO:0051301">
    <property type="term" value="P:cell division"/>
    <property type="evidence" value="ECO:0007669"/>
    <property type="project" value="TreeGrafter"/>
</dbReference>
<dbReference type="GO" id="GO:0051603">
    <property type="term" value="P:proteolysis involved in protein catabolic process"/>
    <property type="evidence" value="ECO:0007669"/>
    <property type="project" value="TreeGrafter"/>
</dbReference>
<dbReference type="CDD" id="cd19497">
    <property type="entry name" value="RecA-like_ClpX"/>
    <property type="match status" value="1"/>
</dbReference>
<dbReference type="FunFam" id="1.10.8.60:FF:000002">
    <property type="entry name" value="ATP-dependent Clp protease ATP-binding subunit ClpX"/>
    <property type="match status" value="1"/>
</dbReference>
<dbReference type="FunFam" id="3.40.50.300:FF:000005">
    <property type="entry name" value="ATP-dependent Clp protease ATP-binding subunit ClpX"/>
    <property type="match status" value="1"/>
</dbReference>
<dbReference type="Gene3D" id="1.10.8.60">
    <property type="match status" value="1"/>
</dbReference>
<dbReference type="Gene3D" id="6.20.220.10">
    <property type="entry name" value="ClpX chaperone, C4-type zinc finger domain"/>
    <property type="match status" value="1"/>
</dbReference>
<dbReference type="Gene3D" id="3.40.50.300">
    <property type="entry name" value="P-loop containing nucleotide triphosphate hydrolases"/>
    <property type="match status" value="1"/>
</dbReference>
<dbReference type="HAMAP" id="MF_00175">
    <property type="entry name" value="ClpX"/>
    <property type="match status" value="1"/>
</dbReference>
<dbReference type="InterPro" id="IPR003593">
    <property type="entry name" value="AAA+_ATPase"/>
</dbReference>
<dbReference type="InterPro" id="IPR050052">
    <property type="entry name" value="ATP-dep_Clp_protease_ClpX"/>
</dbReference>
<dbReference type="InterPro" id="IPR003959">
    <property type="entry name" value="ATPase_AAA_core"/>
</dbReference>
<dbReference type="InterPro" id="IPR019489">
    <property type="entry name" value="Clp_ATPase_C"/>
</dbReference>
<dbReference type="InterPro" id="IPR004487">
    <property type="entry name" value="Clp_protease_ATP-bd_su_ClpX"/>
</dbReference>
<dbReference type="InterPro" id="IPR046425">
    <property type="entry name" value="ClpX_bact"/>
</dbReference>
<dbReference type="InterPro" id="IPR027417">
    <property type="entry name" value="P-loop_NTPase"/>
</dbReference>
<dbReference type="InterPro" id="IPR010603">
    <property type="entry name" value="Znf_CppX_C4"/>
</dbReference>
<dbReference type="InterPro" id="IPR038366">
    <property type="entry name" value="Znf_CppX_C4_sf"/>
</dbReference>
<dbReference type="NCBIfam" id="TIGR00382">
    <property type="entry name" value="clpX"/>
    <property type="match status" value="1"/>
</dbReference>
<dbReference type="NCBIfam" id="NF003745">
    <property type="entry name" value="PRK05342.1"/>
    <property type="match status" value="1"/>
</dbReference>
<dbReference type="PANTHER" id="PTHR48102:SF7">
    <property type="entry name" value="ATP-DEPENDENT CLP PROTEASE ATP-BINDING SUBUNIT CLPX-LIKE, MITOCHONDRIAL"/>
    <property type="match status" value="1"/>
</dbReference>
<dbReference type="PANTHER" id="PTHR48102">
    <property type="entry name" value="ATP-DEPENDENT CLP PROTEASE ATP-BINDING SUBUNIT CLPX-LIKE, MITOCHONDRIAL-RELATED"/>
    <property type="match status" value="1"/>
</dbReference>
<dbReference type="Pfam" id="PF07724">
    <property type="entry name" value="AAA_2"/>
    <property type="match status" value="1"/>
</dbReference>
<dbReference type="Pfam" id="PF10431">
    <property type="entry name" value="ClpB_D2-small"/>
    <property type="match status" value="1"/>
</dbReference>
<dbReference type="Pfam" id="PF06689">
    <property type="entry name" value="zf-C4_ClpX"/>
    <property type="match status" value="1"/>
</dbReference>
<dbReference type="SMART" id="SM00382">
    <property type="entry name" value="AAA"/>
    <property type="match status" value="1"/>
</dbReference>
<dbReference type="SMART" id="SM01086">
    <property type="entry name" value="ClpB_D2-small"/>
    <property type="match status" value="1"/>
</dbReference>
<dbReference type="SMART" id="SM00994">
    <property type="entry name" value="zf-C4_ClpX"/>
    <property type="match status" value="1"/>
</dbReference>
<dbReference type="SUPFAM" id="SSF57716">
    <property type="entry name" value="Glucocorticoid receptor-like (DNA-binding domain)"/>
    <property type="match status" value="1"/>
</dbReference>
<dbReference type="SUPFAM" id="SSF52540">
    <property type="entry name" value="P-loop containing nucleoside triphosphate hydrolases"/>
    <property type="match status" value="1"/>
</dbReference>
<dbReference type="PROSITE" id="PS51902">
    <property type="entry name" value="CLPX_ZB"/>
    <property type="match status" value="1"/>
</dbReference>
<sequence length="412" mass="45320">MTKETETTCSFCGKSQDEVGKLIAGVDGYICGECIDLCHDLLHDEETREQQSAEEAVETEEKLPTPHEIRAHLDDYVIGQDYAKKVLAVAVYNHYKRLRSNHGIADVELGKSNILLIGPTGSGKTLLAETMARMLNVPFAMADATTLTEAGYVGEDVENVIQKLLQNCDYDTEKAQRGIIYIDEIDKITRKSENPSITRDVSGEGVQQALLKLIEGTVASIPPQGGRKHPQQEMLRVDTSKILFICGGAFAGLDRVVQKRIHKGSGIGFDAEVKGKEDEVSLTDLLKQIETEDLIKYGLIPEFIGRLPVVAPLSELDEKALVQILTEPKNALTKQYQALFGLENVELEFTPEALNAMAKKALERKTGARGLRSIVEGALLDTMYDLPSLEGLVKVVVDEAVINEHSAPKLEY</sequence>
<accession>Q65RF7</accession>
<evidence type="ECO:0000255" key="1">
    <source>
        <dbReference type="HAMAP-Rule" id="MF_00175"/>
    </source>
</evidence>
<evidence type="ECO:0000255" key="2">
    <source>
        <dbReference type="PROSITE-ProRule" id="PRU01250"/>
    </source>
</evidence>
<organism>
    <name type="scientific">Mannheimia succiniciproducens (strain KCTC 0769BP / MBEL55E)</name>
    <dbReference type="NCBI Taxonomy" id="221988"/>
    <lineage>
        <taxon>Bacteria</taxon>
        <taxon>Pseudomonadati</taxon>
        <taxon>Pseudomonadota</taxon>
        <taxon>Gammaproteobacteria</taxon>
        <taxon>Pasteurellales</taxon>
        <taxon>Pasteurellaceae</taxon>
        <taxon>Basfia</taxon>
    </lineage>
</organism>